<sequence>MGLSTLEQKLTEMITAPVEALGFELVGIEFIRGRTSTLRIYIDSEDGINVDDCADVSHQVSAVLDVEDPITVAYNLEVSSPGLDRPLFTAEHYARFVGEEVTLVLRMAVQNRRKWQGVIKAVDGEMITVTVEGKDEVFALSNIQKANLVPHF</sequence>
<gene>
    <name evidence="1" type="primary">rimP</name>
    <name type="ordered locus">SSON_3316</name>
</gene>
<proteinExistence type="inferred from homology"/>
<evidence type="ECO:0000255" key="1">
    <source>
        <dbReference type="HAMAP-Rule" id="MF_01077"/>
    </source>
</evidence>
<comment type="function">
    <text evidence="1">Required for maturation of 30S ribosomal subunits.</text>
</comment>
<comment type="subcellular location">
    <subcellularLocation>
        <location evidence="1">Cytoplasm</location>
    </subcellularLocation>
</comment>
<comment type="similarity">
    <text evidence="1">Belongs to the RimP family.</text>
</comment>
<feature type="chain" id="PRO_0000229278" description="Ribosome maturation factor RimP">
    <location>
        <begin position="1"/>
        <end position="152"/>
    </location>
</feature>
<accession>Q3YX71</accession>
<name>RIMP_SHISS</name>
<dbReference type="EMBL" id="CP000038">
    <property type="protein sequence ID" value="AAZ89891.1"/>
    <property type="molecule type" value="Genomic_DNA"/>
</dbReference>
<dbReference type="SMR" id="Q3YX71"/>
<dbReference type="KEGG" id="ssn:SSON_3316"/>
<dbReference type="HOGENOM" id="CLU_070525_1_1_6"/>
<dbReference type="Proteomes" id="UP000002529">
    <property type="component" value="Chromosome"/>
</dbReference>
<dbReference type="GO" id="GO:0005829">
    <property type="term" value="C:cytosol"/>
    <property type="evidence" value="ECO:0007669"/>
    <property type="project" value="TreeGrafter"/>
</dbReference>
<dbReference type="GO" id="GO:0000028">
    <property type="term" value="P:ribosomal small subunit assembly"/>
    <property type="evidence" value="ECO:0007669"/>
    <property type="project" value="TreeGrafter"/>
</dbReference>
<dbReference type="GO" id="GO:0006412">
    <property type="term" value="P:translation"/>
    <property type="evidence" value="ECO:0007669"/>
    <property type="project" value="TreeGrafter"/>
</dbReference>
<dbReference type="CDD" id="cd01734">
    <property type="entry name" value="YlxS_C"/>
    <property type="match status" value="1"/>
</dbReference>
<dbReference type="FunFam" id="2.30.30.180:FF:000001">
    <property type="entry name" value="Ribosome maturation factor RimP"/>
    <property type="match status" value="1"/>
</dbReference>
<dbReference type="FunFam" id="3.30.300.70:FF:000001">
    <property type="entry name" value="Ribosome maturation factor RimP"/>
    <property type="match status" value="1"/>
</dbReference>
<dbReference type="Gene3D" id="2.30.30.180">
    <property type="entry name" value="Ribosome maturation factor RimP, C-terminal domain"/>
    <property type="match status" value="1"/>
</dbReference>
<dbReference type="Gene3D" id="3.30.300.70">
    <property type="entry name" value="RimP-like superfamily, N-terminal"/>
    <property type="match status" value="1"/>
</dbReference>
<dbReference type="HAMAP" id="MF_01077">
    <property type="entry name" value="RimP"/>
    <property type="match status" value="1"/>
</dbReference>
<dbReference type="InterPro" id="IPR003728">
    <property type="entry name" value="Ribosome_maturation_RimP"/>
</dbReference>
<dbReference type="InterPro" id="IPR028998">
    <property type="entry name" value="RimP_C"/>
</dbReference>
<dbReference type="InterPro" id="IPR036847">
    <property type="entry name" value="RimP_C_sf"/>
</dbReference>
<dbReference type="InterPro" id="IPR028989">
    <property type="entry name" value="RimP_N"/>
</dbReference>
<dbReference type="InterPro" id="IPR035956">
    <property type="entry name" value="RimP_N_sf"/>
</dbReference>
<dbReference type="NCBIfam" id="NF000927">
    <property type="entry name" value="PRK00092.1-1"/>
    <property type="match status" value="1"/>
</dbReference>
<dbReference type="PANTHER" id="PTHR33867">
    <property type="entry name" value="RIBOSOME MATURATION FACTOR RIMP"/>
    <property type="match status" value="1"/>
</dbReference>
<dbReference type="PANTHER" id="PTHR33867:SF1">
    <property type="entry name" value="RIBOSOME MATURATION FACTOR RIMP"/>
    <property type="match status" value="1"/>
</dbReference>
<dbReference type="Pfam" id="PF17384">
    <property type="entry name" value="DUF150_C"/>
    <property type="match status" value="1"/>
</dbReference>
<dbReference type="Pfam" id="PF02576">
    <property type="entry name" value="RimP_N"/>
    <property type="match status" value="1"/>
</dbReference>
<dbReference type="SUPFAM" id="SSF74942">
    <property type="entry name" value="YhbC-like, C-terminal domain"/>
    <property type="match status" value="1"/>
</dbReference>
<dbReference type="SUPFAM" id="SSF75420">
    <property type="entry name" value="YhbC-like, N-terminal domain"/>
    <property type="match status" value="1"/>
</dbReference>
<keyword id="KW-0963">Cytoplasm</keyword>
<keyword id="KW-1185">Reference proteome</keyword>
<keyword id="KW-0690">Ribosome biogenesis</keyword>
<reference key="1">
    <citation type="journal article" date="2005" name="Nucleic Acids Res.">
        <title>Genome dynamics and diversity of Shigella species, the etiologic agents of bacillary dysentery.</title>
        <authorList>
            <person name="Yang F."/>
            <person name="Yang J."/>
            <person name="Zhang X."/>
            <person name="Chen L."/>
            <person name="Jiang Y."/>
            <person name="Yan Y."/>
            <person name="Tang X."/>
            <person name="Wang J."/>
            <person name="Xiong Z."/>
            <person name="Dong J."/>
            <person name="Xue Y."/>
            <person name="Zhu Y."/>
            <person name="Xu X."/>
            <person name="Sun L."/>
            <person name="Chen S."/>
            <person name="Nie H."/>
            <person name="Peng J."/>
            <person name="Xu J."/>
            <person name="Wang Y."/>
            <person name="Yuan Z."/>
            <person name="Wen Y."/>
            <person name="Yao Z."/>
            <person name="Shen Y."/>
            <person name="Qiang B."/>
            <person name="Hou Y."/>
            <person name="Yu J."/>
            <person name="Jin Q."/>
        </authorList>
    </citation>
    <scope>NUCLEOTIDE SEQUENCE [LARGE SCALE GENOMIC DNA]</scope>
    <source>
        <strain>Ss046</strain>
    </source>
</reference>
<organism>
    <name type="scientific">Shigella sonnei (strain Ss046)</name>
    <dbReference type="NCBI Taxonomy" id="300269"/>
    <lineage>
        <taxon>Bacteria</taxon>
        <taxon>Pseudomonadati</taxon>
        <taxon>Pseudomonadota</taxon>
        <taxon>Gammaproteobacteria</taxon>
        <taxon>Enterobacterales</taxon>
        <taxon>Enterobacteriaceae</taxon>
        <taxon>Shigella</taxon>
    </lineage>
</organism>
<protein>
    <recommendedName>
        <fullName evidence="1">Ribosome maturation factor RimP</fullName>
    </recommendedName>
</protein>